<feature type="chain" id="PRO_1000049837" description="3-hydroxyacyl-[acyl-carrier-protein] dehydratase FabZ">
    <location>
        <begin position="1"/>
        <end position="155"/>
    </location>
</feature>
<feature type="active site" evidence="1">
    <location>
        <position position="54"/>
    </location>
</feature>
<dbReference type="EC" id="4.2.1.59" evidence="1"/>
<dbReference type="EMBL" id="CP000526">
    <property type="protein sequence ID" value="ABM49769.1"/>
    <property type="molecule type" value="Genomic_DNA"/>
</dbReference>
<dbReference type="RefSeq" id="WP_004192266.1">
    <property type="nucleotide sequence ID" value="NC_008785.1"/>
</dbReference>
<dbReference type="SMR" id="A1V557"/>
<dbReference type="GeneID" id="93060689"/>
<dbReference type="KEGG" id="bmv:BMASAVP1_A2044"/>
<dbReference type="HOGENOM" id="CLU_078912_1_0_4"/>
<dbReference type="GO" id="GO:0005737">
    <property type="term" value="C:cytoplasm"/>
    <property type="evidence" value="ECO:0007669"/>
    <property type="project" value="UniProtKB-SubCell"/>
</dbReference>
<dbReference type="GO" id="GO:0016020">
    <property type="term" value="C:membrane"/>
    <property type="evidence" value="ECO:0007669"/>
    <property type="project" value="GOC"/>
</dbReference>
<dbReference type="GO" id="GO:0019171">
    <property type="term" value="F:(3R)-hydroxyacyl-[acyl-carrier-protein] dehydratase activity"/>
    <property type="evidence" value="ECO:0007669"/>
    <property type="project" value="UniProtKB-EC"/>
</dbReference>
<dbReference type="GO" id="GO:0006633">
    <property type="term" value="P:fatty acid biosynthetic process"/>
    <property type="evidence" value="ECO:0007669"/>
    <property type="project" value="UniProtKB-UniRule"/>
</dbReference>
<dbReference type="GO" id="GO:0009245">
    <property type="term" value="P:lipid A biosynthetic process"/>
    <property type="evidence" value="ECO:0007669"/>
    <property type="project" value="UniProtKB-UniRule"/>
</dbReference>
<dbReference type="CDD" id="cd01288">
    <property type="entry name" value="FabZ"/>
    <property type="match status" value="1"/>
</dbReference>
<dbReference type="FunFam" id="3.10.129.10:FF:000001">
    <property type="entry name" value="3-hydroxyacyl-[acyl-carrier-protein] dehydratase FabZ"/>
    <property type="match status" value="1"/>
</dbReference>
<dbReference type="Gene3D" id="3.10.129.10">
    <property type="entry name" value="Hotdog Thioesterase"/>
    <property type="match status" value="1"/>
</dbReference>
<dbReference type="HAMAP" id="MF_00406">
    <property type="entry name" value="FabZ"/>
    <property type="match status" value="1"/>
</dbReference>
<dbReference type="InterPro" id="IPR013114">
    <property type="entry name" value="FabA_FabZ"/>
</dbReference>
<dbReference type="InterPro" id="IPR010084">
    <property type="entry name" value="FabZ"/>
</dbReference>
<dbReference type="InterPro" id="IPR029069">
    <property type="entry name" value="HotDog_dom_sf"/>
</dbReference>
<dbReference type="NCBIfam" id="TIGR01750">
    <property type="entry name" value="fabZ"/>
    <property type="match status" value="1"/>
</dbReference>
<dbReference type="NCBIfam" id="NF000582">
    <property type="entry name" value="PRK00006.1"/>
    <property type="match status" value="1"/>
</dbReference>
<dbReference type="PANTHER" id="PTHR30272">
    <property type="entry name" value="3-HYDROXYACYL-[ACYL-CARRIER-PROTEIN] DEHYDRATASE"/>
    <property type="match status" value="1"/>
</dbReference>
<dbReference type="PANTHER" id="PTHR30272:SF1">
    <property type="entry name" value="3-HYDROXYACYL-[ACYL-CARRIER-PROTEIN] DEHYDRATASE"/>
    <property type="match status" value="1"/>
</dbReference>
<dbReference type="Pfam" id="PF07977">
    <property type="entry name" value="FabA"/>
    <property type="match status" value="1"/>
</dbReference>
<dbReference type="SUPFAM" id="SSF54637">
    <property type="entry name" value="Thioesterase/thiol ester dehydrase-isomerase"/>
    <property type="match status" value="1"/>
</dbReference>
<proteinExistence type="inferred from homology"/>
<keyword id="KW-0963">Cytoplasm</keyword>
<keyword id="KW-0441">Lipid A biosynthesis</keyword>
<keyword id="KW-0444">Lipid biosynthesis</keyword>
<keyword id="KW-0443">Lipid metabolism</keyword>
<keyword id="KW-0456">Lyase</keyword>
<gene>
    <name evidence="1" type="primary">fabZ</name>
    <name type="ordered locus">BMASAVP1_A2044</name>
</gene>
<evidence type="ECO:0000255" key="1">
    <source>
        <dbReference type="HAMAP-Rule" id="MF_00406"/>
    </source>
</evidence>
<reference key="1">
    <citation type="journal article" date="2010" name="Genome Biol. Evol.">
        <title>Continuing evolution of Burkholderia mallei through genome reduction and large-scale rearrangements.</title>
        <authorList>
            <person name="Losada L."/>
            <person name="Ronning C.M."/>
            <person name="DeShazer D."/>
            <person name="Woods D."/>
            <person name="Fedorova N."/>
            <person name="Kim H.S."/>
            <person name="Shabalina S.A."/>
            <person name="Pearson T.R."/>
            <person name="Brinkac L."/>
            <person name="Tan P."/>
            <person name="Nandi T."/>
            <person name="Crabtree J."/>
            <person name="Badger J."/>
            <person name="Beckstrom-Sternberg S."/>
            <person name="Saqib M."/>
            <person name="Schutzer S.E."/>
            <person name="Keim P."/>
            <person name="Nierman W.C."/>
        </authorList>
    </citation>
    <scope>NUCLEOTIDE SEQUENCE [LARGE SCALE GENOMIC DNA]</scope>
    <source>
        <strain>SAVP1</strain>
    </source>
</reference>
<sequence>MSTEKINFDIHKILTLLPHRYPILLVDRVLELEPHKAIKALKNVTVNEPFFTGHFPKRPVMPGVLIIEALAQAAALLTFAEAQPKDPENTLYYFVGIDNARFKRVVEPGDQLILNVTFERYIRGIWKFKAVAEVDGKVAAEAELMCTVKTADAAP</sequence>
<comment type="function">
    <text evidence="1">Involved in unsaturated fatty acids biosynthesis. Catalyzes the dehydration of short chain beta-hydroxyacyl-ACPs and long chain saturated and unsaturated beta-hydroxyacyl-ACPs.</text>
</comment>
<comment type="catalytic activity">
    <reaction evidence="1">
        <text>a (3R)-hydroxyacyl-[ACP] = a (2E)-enoyl-[ACP] + H2O</text>
        <dbReference type="Rhea" id="RHEA:13097"/>
        <dbReference type="Rhea" id="RHEA-COMP:9925"/>
        <dbReference type="Rhea" id="RHEA-COMP:9945"/>
        <dbReference type="ChEBI" id="CHEBI:15377"/>
        <dbReference type="ChEBI" id="CHEBI:78784"/>
        <dbReference type="ChEBI" id="CHEBI:78827"/>
        <dbReference type="EC" id="4.2.1.59"/>
    </reaction>
</comment>
<comment type="subcellular location">
    <subcellularLocation>
        <location evidence="1">Cytoplasm</location>
    </subcellularLocation>
</comment>
<comment type="similarity">
    <text evidence="1">Belongs to the thioester dehydratase family. FabZ subfamily.</text>
</comment>
<protein>
    <recommendedName>
        <fullName evidence="1">3-hydroxyacyl-[acyl-carrier-protein] dehydratase FabZ</fullName>
        <ecNumber evidence="1">4.2.1.59</ecNumber>
    </recommendedName>
    <alternativeName>
        <fullName evidence="1">(3R)-hydroxymyristoyl-[acyl-carrier-protein] dehydratase</fullName>
        <shortName evidence="1">(3R)-hydroxymyristoyl-ACP dehydrase</shortName>
    </alternativeName>
    <alternativeName>
        <fullName evidence="1">Beta-hydroxyacyl-ACP dehydratase</fullName>
    </alternativeName>
</protein>
<name>FABZ_BURMS</name>
<accession>A1V557</accession>
<organism>
    <name type="scientific">Burkholderia mallei (strain SAVP1)</name>
    <dbReference type="NCBI Taxonomy" id="320388"/>
    <lineage>
        <taxon>Bacteria</taxon>
        <taxon>Pseudomonadati</taxon>
        <taxon>Pseudomonadota</taxon>
        <taxon>Betaproteobacteria</taxon>
        <taxon>Burkholderiales</taxon>
        <taxon>Burkholderiaceae</taxon>
        <taxon>Burkholderia</taxon>
        <taxon>pseudomallei group</taxon>
    </lineage>
</organism>